<dbReference type="EMBL" id="AB618633">
    <property type="protein sequence ID" value="BAL41365.1"/>
    <property type="molecule type" value="mRNA"/>
</dbReference>
<dbReference type="GO" id="GO:0005576">
    <property type="term" value="C:extracellular region"/>
    <property type="evidence" value="ECO:0007669"/>
    <property type="project" value="UniProtKB-SubCell"/>
</dbReference>
<dbReference type="GO" id="GO:0005509">
    <property type="term" value="F:calcium ion binding"/>
    <property type="evidence" value="ECO:0007669"/>
    <property type="project" value="InterPro"/>
</dbReference>
<dbReference type="Gene3D" id="1.10.238.10">
    <property type="entry name" value="EF-hand"/>
    <property type="match status" value="3"/>
</dbReference>
<dbReference type="InterPro" id="IPR051581">
    <property type="entry name" value="Ca-bind_SignalingProt"/>
</dbReference>
<dbReference type="InterPro" id="IPR011992">
    <property type="entry name" value="EF-hand-dom_pair"/>
</dbReference>
<dbReference type="InterPro" id="IPR018247">
    <property type="entry name" value="EF_Hand_1_Ca_BS"/>
</dbReference>
<dbReference type="InterPro" id="IPR002048">
    <property type="entry name" value="EF_hand_dom"/>
</dbReference>
<dbReference type="PANTHER" id="PTHR34524">
    <property type="entry name" value="CALCYPHOSIN"/>
    <property type="match status" value="1"/>
</dbReference>
<dbReference type="PANTHER" id="PTHR34524:SF6">
    <property type="entry name" value="CALCYPHOSINE LIKE"/>
    <property type="match status" value="1"/>
</dbReference>
<dbReference type="SUPFAM" id="SSF47473">
    <property type="entry name" value="EF-hand"/>
    <property type="match status" value="2"/>
</dbReference>
<dbReference type="PROSITE" id="PS00018">
    <property type="entry name" value="EF_HAND_1"/>
    <property type="match status" value="1"/>
</dbReference>
<dbReference type="PROSITE" id="PS50222">
    <property type="entry name" value="EF_HAND_2"/>
    <property type="match status" value="5"/>
</dbReference>
<keyword id="KW-0106">Calcium</keyword>
<keyword id="KW-0903">Direct protein sequencing</keyword>
<keyword id="KW-0479">Metal-binding</keyword>
<keyword id="KW-0677">Repeat</keyword>
<keyword id="KW-0964">Secreted</keyword>
<keyword id="KW-0732">Signal</keyword>
<protein>
    <recommendedName>
        <fullName evidence="3">Calcium-binding protein SP84</fullName>
    </recommendedName>
    <alternativeName>
        <fullName evidence="3">84 kDa salivary protein</fullName>
        <shortName evidence="3">NcSP84</shortName>
    </alternativeName>
</protein>
<name>EFCB_NEPCI</name>
<sequence length="687" mass="79605">MMRAIYLLVVVCWAAAANASSDTVPAEVQTIVKTPGHQYDLYKKMVATISLPANANTEIHKGLNIKRPDNKVTKADIELYYWHKDLKYAVTKFLHLINDDGNKEELTAEEFSNDLQKLAFKVALVECHYQLSPGLRQACYADEILTYGALVLESDDITKFYKHLDNDKDNELKTEEVLKIQHTHKNKDNKIVAEELGAYSGAKKDTVTPEEFEEYVTQESIVDDFRECRSKKATEGTTDYDNVCLTNELVEYVNDDLTEIDISLLYRSVDTNNDNKIIIDELKAFTGITDDVKAKRILELLDMSATTPANAKPVVDYGEWRTYLRSPTVLLQLERDCAMKHNDQLEEINCMYKLLKNLLIDEHDPIWLEAWDLDHVILFEIFDADKDDGKVFKDDLKKIQKNFHFKTEATVTRYMVEADIDKDSFICLEEFDEYMDIPHMVYGTGECILHSRTKPDERGDCFVEETSDVVDNFKFIENAAFDTWFNHYDTNHNNKIEKEADGLLAKFNNDANVLTMFLEETGQGGLTVEPFEFNWYVKQQHLAHAYEDEKIVTALVQKFTAEQITKLHTELIKYINDEMTERDIEDLFDELDHNDDHELTQQDFPDCWNDVKDLLTHIDALIPEGDEDTTVNYLEFWAWINHPNPKKPQELIKKTFETDCTTKHATQKEEVACYVKTFKTKDKFKTA</sequence>
<proteinExistence type="evidence at protein level"/>
<accession>G9M8X1</accession>
<organism>
    <name type="scientific">Nephotettix cincticeps</name>
    <name type="common">Green rice leafhopper</name>
    <name type="synonym">Selenocephalus cincticeps</name>
    <dbReference type="NCBI Taxonomy" id="94400"/>
    <lineage>
        <taxon>Eukaryota</taxon>
        <taxon>Metazoa</taxon>
        <taxon>Ecdysozoa</taxon>
        <taxon>Arthropoda</taxon>
        <taxon>Hexapoda</taxon>
        <taxon>Insecta</taxon>
        <taxon>Pterygota</taxon>
        <taxon>Neoptera</taxon>
        <taxon>Paraneoptera</taxon>
        <taxon>Hemiptera</taxon>
        <taxon>Auchenorrhyncha</taxon>
        <taxon>Membracoidea</taxon>
        <taxon>Cicadellidae</taxon>
        <taxon>Deltocephalinae</taxon>
        <taxon>Chiasmini</taxon>
        <taxon>Nephotettix</taxon>
    </lineage>
</organism>
<reference evidence="4 5" key="1">
    <citation type="journal article" date="2012" name="Insect Biochem. Mol. Biol.">
        <title>Molecular cloning of a novel calcium-binding protein in the secreted saliva of the green rice leafhopper Nephotettix cincticeps.</title>
        <authorList>
            <person name="Hattori M."/>
            <person name="Nakamura M."/>
            <person name="Komatsu S."/>
            <person name="Tsuchihara K."/>
            <person name="Tamura Y."/>
            <person name="Hasegawa T."/>
        </authorList>
    </citation>
    <scope>NUCLEOTIDE SEQUENCE [MRNA]</scope>
    <scope>PROTEIN SEQUENCE OF 20-37</scope>
    <scope>FUNCTION</scope>
    <scope>SUBCELLULAR LOCATION</scope>
    <scope>TISSUE SPECIFICITY</scope>
    <scope>DEVELOPMENTAL STAGE</scope>
    <scope>CALCIUM-BINDING</scope>
    <source>
        <tissue evidence="2">Saliva</tissue>
        <tissue evidence="2">Salivary gland</tissue>
    </source>
</reference>
<comment type="function">
    <text evidence="2 3">Binds calcium. During feeding of the phloem sap, protein is injected into sieve tubes of rice plants. This process may suppress the sieve-element clogging and facilitate continuous ingestion from sieve tubes.</text>
</comment>
<comment type="subcellular location">
    <subcellularLocation>
        <location evidence="2">Secreted</location>
    </subcellularLocation>
</comment>
<comment type="tissue specificity">
    <text evidence="2">Expressed in salivary glands where expression is strongest in type III cells in the posterior lobe of the principal glands (at protein level). Not expressed in midgut, Malpighian tubules or epidermis.</text>
</comment>
<comment type="developmental stage">
    <text evidence="2">Expressed on days 0-7 after adult emergence at roughly constant level (at protein level).</text>
</comment>
<feature type="signal peptide" evidence="2">
    <location>
        <begin position="1"/>
        <end position="19"/>
    </location>
</feature>
<feature type="chain" id="PRO_0000416970" description="Calcium-binding protein SP84" evidence="3">
    <location>
        <begin position="20"/>
        <end position="687"/>
    </location>
</feature>
<feature type="domain" description="EF-hand 1" evidence="1">
    <location>
        <begin position="152"/>
        <end position="187"/>
    </location>
</feature>
<feature type="domain" description="EF-hand 2" evidence="1">
    <location>
        <begin position="257"/>
        <end position="292"/>
    </location>
</feature>
<feature type="domain" description="EF-hand 3" evidence="1">
    <location>
        <begin position="406"/>
        <end position="441"/>
    </location>
</feature>
<feature type="domain" description="EF-hand 4" evidence="1">
    <location>
        <begin position="476"/>
        <end position="511"/>
    </location>
</feature>
<feature type="domain" description="EF-hand 5" evidence="1">
    <location>
        <begin position="579"/>
        <end position="614"/>
    </location>
</feature>
<feature type="binding site" evidence="1">
    <location>
        <position position="592"/>
    </location>
    <ligand>
        <name>Ca(2+)</name>
        <dbReference type="ChEBI" id="CHEBI:29108"/>
    </ligand>
</feature>
<feature type="binding site" evidence="1">
    <location>
        <position position="594"/>
    </location>
    <ligand>
        <name>Ca(2+)</name>
        <dbReference type="ChEBI" id="CHEBI:29108"/>
    </ligand>
</feature>
<feature type="binding site" evidence="1">
    <location>
        <position position="596"/>
    </location>
    <ligand>
        <name>Ca(2+)</name>
        <dbReference type="ChEBI" id="CHEBI:29108"/>
    </ligand>
</feature>
<feature type="binding site" evidence="1">
    <location>
        <position position="598"/>
    </location>
    <ligand>
        <name>Ca(2+)</name>
        <dbReference type="ChEBI" id="CHEBI:29108"/>
    </ligand>
</feature>
<feature type="binding site" evidence="1">
    <location>
        <position position="603"/>
    </location>
    <ligand>
        <name>Ca(2+)</name>
        <dbReference type="ChEBI" id="CHEBI:29108"/>
    </ligand>
</feature>
<evidence type="ECO:0000255" key="1">
    <source>
        <dbReference type="PROSITE-ProRule" id="PRU00448"/>
    </source>
</evidence>
<evidence type="ECO:0000269" key="2">
    <source>
    </source>
</evidence>
<evidence type="ECO:0000303" key="3">
    <source>
    </source>
</evidence>
<evidence type="ECO:0000305" key="4"/>
<evidence type="ECO:0000312" key="5">
    <source>
        <dbReference type="EMBL" id="BAL41365.1"/>
    </source>
</evidence>